<keyword id="KW-0961">Cell wall biogenesis/degradation</keyword>
<keyword id="KW-0325">Glycoprotein</keyword>
<keyword id="KW-0328">Glycosyltransferase</keyword>
<keyword id="KW-0333">Golgi apparatus</keyword>
<keyword id="KW-1185">Reference proteome</keyword>
<keyword id="KW-0808">Transferase</keyword>
<reference key="1">
    <citation type="journal article" date="1999" name="Nature">
        <title>Sequence and analysis of chromosome 2 of the plant Arabidopsis thaliana.</title>
        <authorList>
            <person name="Lin X."/>
            <person name="Kaul S."/>
            <person name="Rounsley S.D."/>
            <person name="Shea T.P."/>
            <person name="Benito M.-I."/>
            <person name="Town C.D."/>
            <person name="Fujii C.Y."/>
            <person name="Mason T.M."/>
            <person name="Bowman C.L."/>
            <person name="Barnstead M.E."/>
            <person name="Feldblyum T.V."/>
            <person name="Buell C.R."/>
            <person name="Ketchum K.A."/>
            <person name="Lee J.J."/>
            <person name="Ronning C.M."/>
            <person name="Koo H.L."/>
            <person name="Moffat K.S."/>
            <person name="Cronin L.A."/>
            <person name="Shen M."/>
            <person name="Pai G."/>
            <person name="Van Aken S."/>
            <person name="Umayam L."/>
            <person name="Tallon L.J."/>
            <person name="Gill J.E."/>
            <person name="Adams M.D."/>
            <person name="Carrera A.J."/>
            <person name="Creasy T.H."/>
            <person name="Goodman H.M."/>
            <person name="Somerville C.R."/>
            <person name="Copenhaver G.P."/>
            <person name="Preuss D."/>
            <person name="Nierman W.C."/>
            <person name="White O."/>
            <person name="Eisen J.A."/>
            <person name="Salzberg S.L."/>
            <person name="Fraser C.M."/>
            <person name="Venter J.C."/>
        </authorList>
    </citation>
    <scope>NUCLEOTIDE SEQUENCE [LARGE SCALE GENOMIC DNA]</scope>
    <source>
        <strain>cv. Columbia</strain>
    </source>
</reference>
<reference key="2">
    <citation type="journal article" date="2017" name="Plant J.">
        <title>Araport11: a complete reannotation of the Arabidopsis thaliana reference genome.</title>
        <authorList>
            <person name="Cheng C.Y."/>
            <person name="Krishnakumar V."/>
            <person name="Chan A.P."/>
            <person name="Thibaud-Nissen F."/>
            <person name="Schobel S."/>
            <person name="Town C.D."/>
        </authorList>
    </citation>
    <scope>GENOME REANNOTATION</scope>
    <source>
        <strain>cv. Columbia</strain>
    </source>
</reference>
<reference key="3">
    <citation type="journal article" date="2001" name="Plant Physiol.">
        <title>Characterization of a family of Arabidopsis genes related to xyloglucan fucosyltransferase1.</title>
        <authorList>
            <person name="Sarria R."/>
            <person name="Wagner T.A."/>
            <person name="O'Neill M.A."/>
            <person name="Faik A."/>
            <person name="Wilkerson C.G."/>
            <person name="Keegstra K."/>
            <person name="Raikhel N.V."/>
        </authorList>
    </citation>
    <scope>IDENTIFICATION AS A PUTATIVE FUCOSYLTRANSFERASE</scope>
    <scope>TISSUE SPECIFICITY</scope>
</reference>
<protein>
    <recommendedName>
        <fullName>Putative fucosyltransferase 10</fullName>
        <shortName>AtFUT10</shortName>
        <ecNumber>2.4.1.-</ecNumber>
    </recommendedName>
</protein>
<sequence>MKILIAVVFGCLLIILSFSKYFNDQLLDATTKDIKESERPVDKLIGGLLTADFDEGSCLSRYHKYFLYRKPSPYMPSEYLVSELRSYEMLHKRCGPDTKAYKEATEKLSRDEYYASESNGECRYIVWLARDGLGNRLITLASVFLYAILTERIILVDNRKDVSDLLCEPFPGTSWLLPLDFPMLNYTYAYGYNKEYPRCYGTMLENHAINSTSIPPHLYLHNIHDSRDSDKLFFCQKDQSFIDKVPWLIIQTNAYFVPSLWLNPTFQTKLVKLFPQKETVFHHLARYLFHPTNEVWDMVTKYYDAHLSNADERLGIQIRVFGKPSGYFKHVMDQVVACTQREKLLPEFEEESKVNISKPPKLKVVLVASLYPEYSVNLTNMFLARPSSTGEIIEVYQPSAERVQQTDKKSHDQKALAEMYLLSLTDNIVTSGWSTFGYVSYSLGGLKPWLLYQPVNFTTPNPPCVRSKSMEPCYHTPPSHGCEADWGTNSGKILPFVRHCEDMMYGGLKLYDDF</sequence>
<feature type="chain" id="PRO_0000193919" description="Putative fucosyltransferase 10">
    <location>
        <begin position="1"/>
        <end position="514"/>
    </location>
</feature>
<feature type="glycosylation site" description="N-linked (GlcNAc...) asparagine" evidence="1">
    <location>
        <position position="185"/>
    </location>
</feature>
<feature type="glycosylation site" description="N-linked (GlcNAc...) asparagine" evidence="1">
    <location>
        <position position="210"/>
    </location>
</feature>
<feature type="glycosylation site" description="N-linked (GlcNAc...) asparagine" evidence="1">
    <location>
        <position position="355"/>
    </location>
</feature>
<feature type="glycosylation site" description="N-linked (GlcNAc...) asparagine" evidence="1">
    <location>
        <position position="377"/>
    </location>
</feature>
<feature type="glycosylation site" description="N-linked (GlcNAc...) asparagine" evidence="1">
    <location>
        <position position="456"/>
    </location>
</feature>
<gene>
    <name type="primary">FUT10</name>
    <name type="ordered locus">At2g15350</name>
    <name type="ORF">F26H6.13</name>
</gene>
<accession>Q9SJP6</accession>
<accession>F4IIF0</accession>
<proteinExistence type="evidence at transcript level"/>
<name>FUT10_ARATH</name>
<dbReference type="EC" id="2.4.1.-"/>
<dbReference type="EMBL" id="AC006920">
    <property type="protein sequence ID" value="AAD22289.1"/>
    <property type="status" value="ALT_SEQ"/>
    <property type="molecule type" value="Genomic_DNA"/>
</dbReference>
<dbReference type="EMBL" id="CP002685">
    <property type="protein sequence ID" value="AEC06392.2"/>
    <property type="molecule type" value="Genomic_DNA"/>
</dbReference>
<dbReference type="PIR" id="H84527">
    <property type="entry name" value="H84527"/>
</dbReference>
<dbReference type="RefSeq" id="NP_001318229.1">
    <property type="nucleotide sequence ID" value="NM_001335450.1"/>
</dbReference>
<dbReference type="SMR" id="Q9SJP6"/>
<dbReference type="BioGRID" id="1386">
    <property type="interactions" value="5"/>
</dbReference>
<dbReference type="IntAct" id="Q9SJP6">
    <property type="interactions" value="5"/>
</dbReference>
<dbReference type="STRING" id="3702.Q9SJP6"/>
<dbReference type="CAZy" id="GT37">
    <property type="family name" value="Glycosyltransferase Family 37"/>
</dbReference>
<dbReference type="GlyCosmos" id="Q9SJP6">
    <property type="glycosylation" value="5 sites, No reported glycans"/>
</dbReference>
<dbReference type="GlyGen" id="Q9SJP6">
    <property type="glycosylation" value="5 sites"/>
</dbReference>
<dbReference type="PaxDb" id="3702-AT2G15350.1"/>
<dbReference type="ProteomicsDB" id="230019"/>
<dbReference type="EnsemblPlants" id="AT2G15350.1">
    <property type="protein sequence ID" value="AT2G15350.1"/>
    <property type="gene ID" value="AT2G15350"/>
</dbReference>
<dbReference type="GeneID" id="816027"/>
<dbReference type="Gramene" id="AT2G15350.1">
    <property type="protein sequence ID" value="AT2G15350.1"/>
    <property type="gene ID" value="AT2G15350"/>
</dbReference>
<dbReference type="KEGG" id="ath:AT2G15350"/>
<dbReference type="Araport" id="AT2G15350"/>
<dbReference type="TAIR" id="AT2G15350">
    <property type="gene designation" value="FUT10"/>
</dbReference>
<dbReference type="eggNOG" id="ENOG502QTTA">
    <property type="taxonomic scope" value="Eukaryota"/>
</dbReference>
<dbReference type="InParanoid" id="Q9SJP6"/>
<dbReference type="OMA" id="ENYAQGN"/>
<dbReference type="PhylomeDB" id="Q9SJP6"/>
<dbReference type="BioCyc" id="ARA:AT2G15350-MONOMER"/>
<dbReference type="UniPathway" id="UPA00378"/>
<dbReference type="PRO" id="PR:Q9SJP6"/>
<dbReference type="Proteomes" id="UP000006548">
    <property type="component" value="Chromosome 2"/>
</dbReference>
<dbReference type="ExpressionAtlas" id="Q9SJP6">
    <property type="expression patterns" value="baseline and differential"/>
</dbReference>
<dbReference type="GO" id="GO:0005794">
    <property type="term" value="C:Golgi apparatus"/>
    <property type="evidence" value="ECO:0007669"/>
    <property type="project" value="UniProtKB-SubCell"/>
</dbReference>
<dbReference type="GO" id="GO:0016020">
    <property type="term" value="C:membrane"/>
    <property type="evidence" value="ECO:0007669"/>
    <property type="project" value="InterPro"/>
</dbReference>
<dbReference type="GO" id="GO:0008417">
    <property type="term" value="F:fucosyltransferase activity"/>
    <property type="evidence" value="ECO:0000250"/>
    <property type="project" value="TAIR"/>
</dbReference>
<dbReference type="GO" id="GO:0008107">
    <property type="term" value="F:galactoside 2-alpha-L-fucosyltransferase activity"/>
    <property type="evidence" value="ECO:0007669"/>
    <property type="project" value="InterPro"/>
</dbReference>
<dbReference type="GO" id="GO:0042546">
    <property type="term" value="P:cell wall biogenesis"/>
    <property type="evidence" value="ECO:0007669"/>
    <property type="project" value="InterPro"/>
</dbReference>
<dbReference type="GO" id="GO:0071555">
    <property type="term" value="P:cell wall organization"/>
    <property type="evidence" value="ECO:0007669"/>
    <property type="project" value="UniProtKB-KW"/>
</dbReference>
<dbReference type="GO" id="GO:0006486">
    <property type="term" value="P:protein glycosylation"/>
    <property type="evidence" value="ECO:0007669"/>
    <property type="project" value="UniProtKB-UniPathway"/>
</dbReference>
<dbReference type="FunFam" id="3.40.50.11340:FF:000005">
    <property type="entry name" value="Galactoside 2-alpha-L-fucosyltransferase"/>
    <property type="match status" value="1"/>
</dbReference>
<dbReference type="Gene3D" id="3.40.50.11340">
    <property type="match status" value="1"/>
</dbReference>
<dbReference type="InterPro" id="IPR004938">
    <property type="entry name" value="XG_FTase"/>
</dbReference>
<dbReference type="PANTHER" id="PTHR31889:SF45">
    <property type="entry name" value="FUCOSYLTRANSFERASE 10-RELATED"/>
    <property type="match status" value="1"/>
</dbReference>
<dbReference type="PANTHER" id="PTHR31889">
    <property type="entry name" value="FUCOSYLTRANSFERASE 2-RELATED"/>
    <property type="match status" value="1"/>
</dbReference>
<dbReference type="Pfam" id="PF03254">
    <property type="entry name" value="XG_FTase"/>
    <property type="match status" value="1"/>
</dbReference>
<organism>
    <name type="scientific">Arabidopsis thaliana</name>
    <name type="common">Mouse-ear cress</name>
    <dbReference type="NCBI Taxonomy" id="3702"/>
    <lineage>
        <taxon>Eukaryota</taxon>
        <taxon>Viridiplantae</taxon>
        <taxon>Streptophyta</taxon>
        <taxon>Embryophyta</taxon>
        <taxon>Tracheophyta</taxon>
        <taxon>Spermatophyta</taxon>
        <taxon>Magnoliopsida</taxon>
        <taxon>eudicotyledons</taxon>
        <taxon>Gunneridae</taxon>
        <taxon>Pentapetalae</taxon>
        <taxon>rosids</taxon>
        <taxon>malvids</taxon>
        <taxon>Brassicales</taxon>
        <taxon>Brassicaceae</taxon>
        <taxon>Camelineae</taxon>
        <taxon>Arabidopsis</taxon>
    </lineage>
</organism>
<evidence type="ECO:0000255" key="1"/>
<evidence type="ECO:0000269" key="2">
    <source>
    </source>
</evidence>
<evidence type="ECO:0000305" key="3"/>
<comment type="function">
    <text>May be involved in cell wall biosynthesis. May act as a fucosyltransferase.</text>
</comment>
<comment type="pathway">
    <text>Protein modification; protein glycosylation.</text>
</comment>
<comment type="subcellular location">
    <subcellularLocation>
        <location evidence="3">Golgi apparatus</location>
    </subcellularLocation>
</comment>
<comment type="tissue specificity">
    <text evidence="2">Expressed in root, leaves, stems and seedlings.</text>
</comment>
<comment type="similarity">
    <text evidence="3">Belongs to the glycosyltransferase 37 family.</text>
</comment>
<comment type="sequence caution" evidence="3">
    <conflict type="erroneous gene model prediction">
        <sequence resource="EMBL-CDS" id="AAD22289"/>
    </conflict>
</comment>